<name>Y807_DECAR</name>
<comment type="function">
    <text evidence="1">Binds to DNA and alters its conformation. May be involved in regulation of gene expression, nucleoid organization and DNA protection.</text>
</comment>
<comment type="subunit">
    <text evidence="1">Homodimer.</text>
</comment>
<comment type="subcellular location">
    <subcellularLocation>
        <location evidence="1">Cytoplasm</location>
        <location evidence="1">Nucleoid</location>
    </subcellularLocation>
</comment>
<comment type="similarity">
    <text evidence="1">Belongs to the YbaB/EbfC family.</text>
</comment>
<keyword id="KW-0963">Cytoplasm</keyword>
<keyword id="KW-0238">DNA-binding</keyword>
<accession>Q47HW8</accession>
<feature type="chain" id="PRO_1000003736" description="Nucleoid-associated protein Daro_0807">
    <location>
        <begin position="1"/>
        <end position="107"/>
    </location>
</feature>
<dbReference type="EMBL" id="CP000089">
    <property type="protein sequence ID" value="AAZ45563.1"/>
    <property type="molecule type" value="Genomic_DNA"/>
</dbReference>
<dbReference type="SMR" id="Q47HW8"/>
<dbReference type="STRING" id="159087.Daro_0807"/>
<dbReference type="KEGG" id="dar:Daro_0807"/>
<dbReference type="eggNOG" id="COG0718">
    <property type="taxonomic scope" value="Bacteria"/>
</dbReference>
<dbReference type="HOGENOM" id="CLU_140930_0_0_4"/>
<dbReference type="OrthoDB" id="9808738at2"/>
<dbReference type="GO" id="GO:0043590">
    <property type="term" value="C:bacterial nucleoid"/>
    <property type="evidence" value="ECO:0007669"/>
    <property type="project" value="UniProtKB-UniRule"/>
</dbReference>
<dbReference type="GO" id="GO:0005829">
    <property type="term" value="C:cytosol"/>
    <property type="evidence" value="ECO:0007669"/>
    <property type="project" value="TreeGrafter"/>
</dbReference>
<dbReference type="GO" id="GO:0003677">
    <property type="term" value="F:DNA binding"/>
    <property type="evidence" value="ECO:0007669"/>
    <property type="project" value="UniProtKB-UniRule"/>
</dbReference>
<dbReference type="Gene3D" id="3.30.1310.10">
    <property type="entry name" value="Nucleoid-associated protein YbaB-like domain"/>
    <property type="match status" value="1"/>
</dbReference>
<dbReference type="HAMAP" id="MF_00274">
    <property type="entry name" value="DNA_YbaB_EbfC"/>
    <property type="match status" value="1"/>
</dbReference>
<dbReference type="InterPro" id="IPR036894">
    <property type="entry name" value="YbaB-like_sf"/>
</dbReference>
<dbReference type="InterPro" id="IPR004401">
    <property type="entry name" value="YbaB/EbfC"/>
</dbReference>
<dbReference type="NCBIfam" id="TIGR00103">
    <property type="entry name" value="DNA_YbaB_EbfC"/>
    <property type="match status" value="1"/>
</dbReference>
<dbReference type="PANTHER" id="PTHR33449">
    <property type="entry name" value="NUCLEOID-ASSOCIATED PROTEIN YBAB"/>
    <property type="match status" value="1"/>
</dbReference>
<dbReference type="PANTHER" id="PTHR33449:SF1">
    <property type="entry name" value="NUCLEOID-ASSOCIATED PROTEIN YBAB"/>
    <property type="match status" value="1"/>
</dbReference>
<dbReference type="Pfam" id="PF02575">
    <property type="entry name" value="YbaB_DNA_bd"/>
    <property type="match status" value="1"/>
</dbReference>
<dbReference type="PIRSF" id="PIRSF004555">
    <property type="entry name" value="UCP004555"/>
    <property type="match status" value="1"/>
</dbReference>
<dbReference type="SUPFAM" id="SSF82607">
    <property type="entry name" value="YbaB-like"/>
    <property type="match status" value="1"/>
</dbReference>
<gene>
    <name type="ordered locus">Daro_0807</name>
</gene>
<proteinExistence type="inferred from homology"/>
<sequence>MMKGGLAGLMKQAQAMQENMKKAQEQLAQVEVEGVAGAGMVKVLMTCAHEVRRVNIDPSVMDDREMLEDLIAAALNDAVRRGEALSKDKMSGFTSGLNLPPGFKLPF</sequence>
<reference key="1">
    <citation type="journal article" date="2009" name="BMC Genomics">
        <title>Metabolic analysis of the soil microbe Dechloromonas aromatica str. RCB: indications of a surprisingly complex life-style and cryptic anaerobic pathways for aromatic degradation.</title>
        <authorList>
            <person name="Salinero K.K."/>
            <person name="Keller K."/>
            <person name="Feil W.S."/>
            <person name="Feil H."/>
            <person name="Trong S."/>
            <person name="Di Bartolo G."/>
            <person name="Lapidus A."/>
        </authorList>
    </citation>
    <scope>NUCLEOTIDE SEQUENCE [LARGE SCALE GENOMIC DNA]</scope>
    <source>
        <strain>RCB</strain>
    </source>
</reference>
<protein>
    <recommendedName>
        <fullName evidence="1">Nucleoid-associated protein Daro_0807</fullName>
    </recommendedName>
</protein>
<organism>
    <name type="scientific">Dechloromonas aromatica (strain RCB)</name>
    <dbReference type="NCBI Taxonomy" id="159087"/>
    <lineage>
        <taxon>Bacteria</taxon>
        <taxon>Pseudomonadati</taxon>
        <taxon>Pseudomonadota</taxon>
        <taxon>Betaproteobacteria</taxon>
        <taxon>Rhodocyclales</taxon>
        <taxon>Azonexaceae</taxon>
        <taxon>Dechloromonas</taxon>
    </lineage>
</organism>
<evidence type="ECO:0000255" key="1">
    <source>
        <dbReference type="HAMAP-Rule" id="MF_00274"/>
    </source>
</evidence>